<name>SRP54_CANLF</name>
<gene>
    <name type="primary">SRP54</name>
</gene>
<sequence>MVLADLGRKITSALRSLSNATIINEEVLNAMLKEVCTALLEADVNIKLVKQLRENVKSAIDLEEMASGLNKRKMIQHAVFKELVKLVDPGVKAWTPTKGKQNVIMFVGLQGSGKTTTCSKLAYYYQRKGWKTCLICADTFRAGAFDQLKQNATKARIPFYGSYTEMDPVIIASEGVEKFKNENFEIIIVDTSGRHKQEDSLFEEMLQVANAIQPDNIVYVMDASIGQACEAQAKAFKDKVDVASVIVTKLDGHAKGGGALSAVAATKSPIIFIGTGEHIDDFEPFKTQPFISKLLGMGDIEGLIDKVNELKLDDNEALIEKLKHGQFTLRDMYEQFQNIMKMGPFSQILGMIPGFGTDFMSKGNEQESMARLKKLMTIMDSMNDQELDSTDGAKVFSKQPGRIQRVARGSGVSTRDVQELLTQYTKFAQMVKKMGGIKGLFKGGDMSKNVSQSQMAKLNQQMAKMMDPRVLHHMGGMAGLQSMMRQFQQGAAGNMKGMMGFNNM</sequence>
<protein>
    <recommendedName>
        <fullName>Signal recognition particle subunit SRP54</fullName>
        <ecNumber evidence="2">3.6.5.4</ecNumber>
    </recommendedName>
    <alternativeName>
        <fullName>Signal recognition particle 54 kDa protein</fullName>
    </alternativeName>
</protein>
<organism>
    <name type="scientific">Canis lupus familiaris</name>
    <name type="common">Dog</name>
    <name type="synonym">Canis familiaris</name>
    <dbReference type="NCBI Taxonomy" id="9615"/>
    <lineage>
        <taxon>Eukaryota</taxon>
        <taxon>Metazoa</taxon>
        <taxon>Chordata</taxon>
        <taxon>Craniata</taxon>
        <taxon>Vertebrata</taxon>
        <taxon>Euteleostomi</taxon>
        <taxon>Mammalia</taxon>
        <taxon>Eutheria</taxon>
        <taxon>Laurasiatheria</taxon>
        <taxon>Carnivora</taxon>
        <taxon>Caniformia</taxon>
        <taxon>Canidae</taxon>
        <taxon>Canis</taxon>
    </lineage>
</organism>
<comment type="function">
    <text evidence="2 3 4">Component of the signal recognition particle (SRP) complex, a ribonucleoprotein complex that mediates the cotranslational targeting of secretory and membrane proteins to the endoplasmic reticulum (ER) (PubMed:6413076, PubMed:6938958). As part of the SRP complex, associates with the SRP receptor (SR) component SRPRA to target secretory proteins to the endoplasmic reticulum membrane (By similarity). Binds to the signal sequence of presecretory proteins when they emerge from the ribosomes (By similarity). Displays basal GTPase activity, and stimulates reciprocal GTPase activation of the SR subunit SRPRA (By similarity). Forms a guanosine 5'-triphosphate (GTP)-dependent complex with the SR subunit SRPRA (By similarity). SR compaction and GTPase mediated rearrangement of SR drive SRP-mediated cotranslational protein translocation into the ER (By similarity). Requires the presence of SRP9/SRP14 and/or SRP19 to stably interact with RNA (PubMed:6413076). Plays a role in proliferation and differentiation of granulocytic cells, neutrophils migration capacity and exocrine pancreas development (By similarity).</text>
</comment>
<comment type="catalytic activity">
    <reaction evidence="2">
        <text>GTP + H2O = GDP + phosphate + H(+)</text>
        <dbReference type="Rhea" id="RHEA:19669"/>
        <dbReference type="ChEBI" id="CHEBI:15377"/>
        <dbReference type="ChEBI" id="CHEBI:15378"/>
        <dbReference type="ChEBI" id="CHEBI:37565"/>
        <dbReference type="ChEBI" id="CHEBI:43474"/>
        <dbReference type="ChEBI" id="CHEBI:58189"/>
        <dbReference type="EC" id="3.6.5.4"/>
    </reaction>
    <physiologicalReaction direction="left-to-right" evidence="2">
        <dbReference type="Rhea" id="RHEA:19670"/>
    </physiologicalReaction>
</comment>
<comment type="subunit">
    <text evidence="2 3 4">Component of a signal recognition particle complex that consists of a 7SL RNA molecule of 300 nucleotides and six protein subunits: SRP72, SRP68, SRP54, SRP19, SRP14 and SRP9 (PubMed:6413076, PubMed:6938958). Interacts with RNPS1 (By similarity). Interacts with the SRP receptor subunit SRPRA (By similarity).</text>
</comment>
<comment type="subcellular location">
    <subcellularLocation>
        <location evidence="2">Nucleus speckle</location>
    </subcellularLocation>
    <subcellularLocation>
        <location evidence="2">Cytoplasm</location>
    </subcellularLocation>
    <subcellularLocation>
        <location evidence="2">Endoplasmic reticulum</location>
    </subcellularLocation>
</comment>
<comment type="domain">
    <text evidence="2">The NG domain, also named G domain, is a special guanosine triphosphatase (GTPase) domain, which binds GTP and forms a guanosine 5'-triphosphate (GTP)-dependent complex with a homologous NG domain in the SRP receptor subunit SRPRA (By similarity). The two NG domains undergo cooperative rearrangements upon their assembly, which culminate in the reciprocal activation of the GTPase activity of one another (By similarity). SRP receptor compaction upon binding with cargo-loaded SRP and GTPase rearrangement drive SRP-mediated cotranslational protein translocation into the ER (By similarity).</text>
</comment>
<comment type="domain">
    <text evidence="2">The M domain binds the 7SL RNA in presence of SRP19 and binds the signal sequence of presecretory proteins.</text>
</comment>
<comment type="similarity">
    <text evidence="5">Belongs to the GTP-binding SRP family. SRP54 subfamily.</text>
</comment>
<keyword id="KW-0002">3D-structure</keyword>
<keyword id="KW-0963">Cytoplasm</keyword>
<keyword id="KW-0903">Direct protein sequencing</keyword>
<keyword id="KW-0256">Endoplasmic reticulum</keyword>
<keyword id="KW-0342">GTP-binding</keyword>
<keyword id="KW-0378">Hydrolase</keyword>
<keyword id="KW-0547">Nucleotide-binding</keyword>
<keyword id="KW-0539">Nucleus</keyword>
<keyword id="KW-1185">Reference proteome</keyword>
<keyword id="KW-0687">Ribonucleoprotein</keyword>
<keyword id="KW-0694">RNA-binding</keyword>
<keyword id="KW-0733">Signal recognition particle</keyword>
<accession>P61010</accession>
<accession>P13624</accession>
<dbReference type="EC" id="3.6.5.4" evidence="2"/>
<dbReference type="EMBL" id="X16318">
    <property type="protein sequence ID" value="CAA34385.1"/>
    <property type="molecule type" value="mRNA"/>
</dbReference>
<dbReference type="PIR" id="S05197">
    <property type="entry name" value="S05197"/>
</dbReference>
<dbReference type="RefSeq" id="NP_001003272.1">
    <property type="nucleotide sequence ID" value="NM_001003272.1"/>
</dbReference>
<dbReference type="RefSeq" id="XP_005623237.1">
    <property type="nucleotide sequence ID" value="XM_005623180.2"/>
</dbReference>
<dbReference type="RefSeq" id="XP_005623238.1">
    <property type="nucleotide sequence ID" value="XM_005623181.2"/>
</dbReference>
<dbReference type="RefSeq" id="XP_038528783.1">
    <property type="nucleotide sequence ID" value="XM_038672855.1"/>
</dbReference>
<dbReference type="RefSeq" id="XP_038528784.1">
    <property type="nucleotide sequence ID" value="XM_038672856.1"/>
</dbReference>
<dbReference type="PDB" id="2GO5">
    <property type="method" value="EM"/>
    <property type="resolution" value="7.40 A"/>
    <property type="chains" value="W=326-434"/>
</dbReference>
<dbReference type="PDB" id="2J37">
    <property type="method" value="EM"/>
    <property type="resolution" value="8.00 A"/>
    <property type="chains" value="W=1-504"/>
</dbReference>
<dbReference type="PDB" id="4UE5">
    <property type="method" value="EM"/>
    <property type="resolution" value="9.00 A"/>
    <property type="chains" value="D=1-433"/>
</dbReference>
<dbReference type="PDB" id="6FRK">
    <property type="method" value="EM"/>
    <property type="resolution" value="3.70 A"/>
    <property type="chains" value="x=1-504"/>
</dbReference>
<dbReference type="PDB" id="6R6G">
    <property type="method" value="EM"/>
    <property type="resolution" value="3.70 A"/>
    <property type="chains" value="AB=4-434"/>
</dbReference>
<dbReference type="PDB" id="7OBQ">
    <property type="method" value="EM"/>
    <property type="resolution" value="3.90 A"/>
    <property type="chains" value="x=1-504"/>
</dbReference>
<dbReference type="PDB" id="7OBR">
    <property type="method" value="EM"/>
    <property type="resolution" value="2.80 A"/>
    <property type="chains" value="x=1-504"/>
</dbReference>
<dbReference type="PDBsum" id="2GO5"/>
<dbReference type="PDBsum" id="2J37"/>
<dbReference type="PDBsum" id="4UE5"/>
<dbReference type="PDBsum" id="6FRK"/>
<dbReference type="PDBsum" id="6R6G"/>
<dbReference type="PDBsum" id="7OBQ"/>
<dbReference type="PDBsum" id="7OBR"/>
<dbReference type="EMDB" id="EMD-12799"/>
<dbReference type="EMDB" id="EMD-12801"/>
<dbReference type="EMDB" id="EMD-2844"/>
<dbReference type="EMDB" id="EMD-4300"/>
<dbReference type="EMDB" id="EMD-4735"/>
<dbReference type="SMR" id="P61010"/>
<dbReference type="FunCoup" id="P61010">
    <property type="interactions" value="2500"/>
</dbReference>
<dbReference type="STRING" id="9615.ENSCAFP00000050551"/>
<dbReference type="PaxDb" id="9612-ENSCAFP00000019649"/>
<dbReference type="Ensembl" id="ENSCAFT00000021158.5">
    <property type="protein sequence ID" value="ENSCAFP00000019649.3"/>
    <property type="gene ID" value="ENSCAFG00000013331.5"/>
</dbReference>
<dbReference type="Ensembl" id="ENSCAFT00030011405.1">
    <property type="protein sequence ID" value="ENSCAFP00030009976.1"/>
    <property type="gene ID" value="ENSCAFG00030006175.1"/>
</dbReference>
<dbReference type="Ensembl" id="ENSCAFT00030011482.1">
    <property type="protein sequence ID" value="ENSCAFP00030010046.1"/>
    <property type="gene ID" value="ENSCAFG00030006175.1"/>
</dbReference>
<dbReference type="Ensembl" id="ENSCAFT00030011562.1">
    <property type="protein sequence ID" value="ENSCAFP00030010116.1"/>
    <property type="gene ID" value="ENSCAFG00030006175.1"/>
</dbReference>
<dbReference type="Ensembl" id="ENSCAFT00030011665.1">
    <property type="protein sequence ID" value="ENSCAFP00030010209.1"/>
    <property type="gene ID" value="ENSCAFG00030006175.1"/>
</dbReference>
<dbReference type="Ensembl" id="ENSCAFT00030011772.1">
    <property type="protein sequence ID" value="ENSCAFP00030010311.1"/>
    <property type="gene ID" value="ENSCAFG00030006175.1"/>
</dbReference>
<dbReference type="Ensembl" id="ENSCAFT00040028476.1">
    <property type="protein sequence ID" value="ENSCAFP00040024744.1"/>
    <property type="gene ID" value="ENSCAFG00040015385.1"/>
</dbReference>
<dbReference type="Ensembl" id="ENSCAFT00845003105.1">
    <property type="protein sequence ID" value="ENSCAFP00845002476.1"/>
    <property type="gene ID" value="ENSCAFG00845001751.1"/>
</dbReference>
<dbReference type="GeneID" id="403953"/>
<dbReference type="KEGG" id="cfa:403953"/>
<dbReference type="CTD" id="6729"/>
<dbReference type="VEuPathDB" id="HostDB:ENSCAFG00845001751"/>
<dbReference type="VGNC" id="VGNC:46807">
    <property type="gene designation" value="SRP54"/>
</dbReference>
<dbReference type="eggNOG" id="KOG0780">
    <property type="taxonomic scope" value="Eukaryota"/>
</dbReference>
<dbReference type="GeneTree" id="ENSGT00550000074824"/>
<dbReference type="HOGENOM" id="CLU_009301_6_1_1"/>
<dbReference type="InParanoid" id="P61010"/>
<dbReference type="OMA" id="GMTGQDA"/>
<dbReference type="OrthoDB" id="10250817at2759"/>
<dbReference type="TreeFam" id="TF106249"/>
<dbReference type="BRENDA" id="3.6.5.4">
    <property type="organism ID" value="1153"/>
</dbReference>
<dbReference type="Reactome" id="R-CFA-1799339">
    <property type="pathway name" value="SRP-dependent cotranslational protein targeting to membrane"/>
</dbReference>
<dbReference type="EvolutionaryTrace" id="P61010"/>
<dbReference type="Proteomes" id="UP000002254">
    <property type="component" value="Chromosome 8"/>
</dbReference>
<dbReference type="Proteomes" id="UP000694429">
    <property type="component" value="Chromosome 8"/>
</dbReference>
<dbReference type="Proteomes" id="UP000694542">
    <property type="component" value="Chromosome 8"/>
</dbReference>
<dbReference type="Proteomes" id="UP000805418">
    <property type="component" value="Chromosome 8"/>
</dbReference>
<dbReference type="Bgee" id="ENSCAFG00000013331">
    <property type="expression patterns" value="Expressed in saliva-secreting gland and 46 other cell types or tissues"/>
</dbReference>
<dbReference type="GO" id="GO:0005829">
    <property type="term" value="C:cytosol"/>
    <property type="evidence" value="ECO:0000318"/>
    <property type="project" value="GO_Central"/>
</dbReference>
<dbReference type="GO" id="GO:0005783">
    <property type="term" value="C:endoplasmic reticulum"/>
    <property type="evidence" value="ECO:0007669"/>
    <property type="project" value="UniProtKB-SubCell"/>
</dbReference>
<dbReference type="GO" id="GO:0016607">
    <property type="term" value="C:nuclear speck"/>
    <property type="evidence" value="ECO:0007669"/>
    <property type="project" value="UniProtKB-SubCell"/>
</dbReference>
<dbReference type="GO" id="GO:0005634">
    <property type="term" value="C:nucleus"/>
    <property type="evidence" value="ECO:0000250"/>
    <property type="project" value="UniProtKB"/>
</dbReference>
<dbReference type="GO" id="GO:0005786">
    <property type="term" value="C:signal recognition particle, endoplasmic reticulum targeting"/>
    <property type="evidence" value="ECO:0000250"/>
    <property type="project" value="UniProtKB"/>
</dbReference>
<dbReference type="GO" id="GO:0008312">
    <property type="term" value="F:7S RNA binding"/>
    <property type="evidence" value="ECO:0000250"/>
    <property type="project" value="UniProtKB"/>
</dbReference>
<dbReference type="GO" id="GO:0016887">
    <property type="term" value="F:ATP hydrolysis activity"/>
    <property type="evidence" value="ECO:0007669"/>
    <property type="project" value="InterPro"/>
</dbReference>
<dbReference type="GO" id="GO:0030942">
    <property type="term" value="F:endoplasmic reticulum signal peptide binding"/>
    <property type="evidence" value="ECO:0000315"/>
    <property type="project" value="UniProtKB"/>
</dbReference>
<dbReference type="GO" id="GO:0019003">
    <property type="term" value="F:GDP binding"/>
    <property type="evidence" value="ECO:0000250"/>
    <property type="project" value="UniProtKB"/>
</dbReference>
<dbReference type="GO" id="GO:0005525">
    <property type="term" value="F:GTP binding"/>
    <property type="evidence" value="ECO:0000250"/>
    <property type="project" value="UniProtKB"/>
</dbReference>
<dbReference type="GO" id="GO:0003924">
    <property type="term" value="F:GTPase activity"/>
    <property type="evidence" value="ECO:0000250"/>
    <property type="project" value="UniProtKB"/>
</dbReference>
<dbReference type="GO" id="GO:0043021">
    <property type="term" value="F:ribonucleoprotein complex binding"/>
    <property type="evidence" value="ECO:0007669"/>
    <property type="project" value="Ensembl"/>
</dbReference>
<dbReference type="GO" id="GO:0031017">
    <property type="term" value="P:exocrine pancreas development"/>
    <property type="evidence" value="ECO:0000250"/>
    <property type="project" value="UniProtKB"/>
</dbReference>
<dbReference type="GO" id="GO:0030851">
    <property type="term" value="P:granulocyte differentiation"/>
    <property type="evidence" value="ECO:0000250"/>
    <property type="project" value="UniProtKB"/>
</dbReference>
<dbReference type="GO" id="GO:0030593">
    <property type="term" value="P:neutrophil chemotaxis"/>
    <property type="evidence" value="ECO:0000250"/>
    <property type="project" value="UniProtKB"/>
</dbReference>
<dbReference type="GO" id="GO:0045047">
    <property type="term" value="P:protein targeting to ER"/>
    <property type="evidence" value="ECO:0000315"/>
    <property type="project" value="UniProtKB"/>
</dbReference>
<dbReference type="GO" id="GO:0006617">
    <property type="term" value="P:SRP-dependent cotranslational protein targeting to membrane, signal sequence recognition"/>
    <property type="evidence" value="ECO:0000315"/>
    <property type="project" value="UniProtKB"/>
</dbReference>
<dbReference type="GO" id="GO:0006616">
    <property type="term" value="P:SRP-dependent cotranslational protein targeting to membrane, translocation"/>
    <property type="evidence" value="ECO:0000314"/>
    <property type="project" value="UniProtKB"/>
</dbReference>
<dbReference type="CDD" id="cd17875">
    <property type="entry name" value="SRP54_G"/>
    <property type="match status" value="1"/>
</dbReference>
<dbReference type="FunFam" id="1.10.260.30:FF:000002">
    <property type="entry name" value="Signal recognition particle 54 kDa protein"/>
    <property type="match status" value="1"/>
</dbReference>
<dbReference type="FunFam" id="1.20.120.140:FF:000003">
    <property type="entry name" value="Signal recognition particle 54 kDa protein"/>
    <property type="match status" value="1"/>
</dbReference>
<dbReference type="FunFam" id="3.40.50.300:FF:000022">
    <property type="entry name" value="Signal recognition particle 54 kDa subunit"/>
    <property type="match status" value="1"/>
</dbReference>
<dbReference type="Gene3D" id="3.40.50.300">
    <property type="entry name" value="P-loop containing nucleotide triphosphate hydrolases"/>
    <property type="match status" value="1"/>
</dbReference>
<dbReference type="Gene3D" id="1.20.120.140">
    <property type="entry name" value="Signal recognition particle SRP54, nucleotide-binding domain"/>
    <property type="match status" value="1"/>
</dbReference>
<dbReference type="Gene3D" id="1.10.260.30">
    <property type="entry name" value="Signal recognition particle, SRP54 subunit, M-domain"/>
    <property type="match status" value="1"/>
</dbReference>
<dbReference type="HAMAP" id="MF_00306">
    <property type="entry name" value="SRP54"/>
    <property type="match status" value="1"/>
</dbReference>
<dbReference type="InterPro" id="IPR003593">
    <property type="entry name" value="AAA+_ATPase"/>
</dbReference>
<dbReference type="InterPro" id="IPR027417">
    <property type="entry name" value="P-loop_NTPase"/>
</dbReference>
<dbReference type="InterPro" id="IPR036891">
    <property type="entry name" value="Signal_recog_part_SRP54_M_sf"/>
</dbReference>
<dbReference type="InterPro" id="IPR013822">
    <property type="entry name" value="Signal_recog_particl_SRP54_hlx"/>
</dbReference>
<dbReference type="InterPro" id="IPR004125">
    <property type="entry name" value="Signal_recog_particle_SRP54_M"/>
</dbReference>
<dbReference type="InterPro" id="IPR036225">
    <property type="entry name" value="SRP/SRP_N"/>
</dbReference>
<dbReference type="InterPro" id="IPR022941">
    <property type="entry name" value="SRP54"/>
</dbReference>
<dbReference type="InterPro" id="IPR006325">
    <property type="entry name" value="SRP54_euk"/>
</dbReference>
<dbReference type="InterPro" id="IPR000897">
    <property type="entry name" value="SRP54_GTPase_dom"/>
</dbReference>
<dbReference type="InterPro" id="IPR042101">
    <property type="entry name" value="SRP54_N_sf"/>
</dbReference>
<dbReference type="NCBIfam" id="TIGR01425">
    <property type="entry name" value="SRP54_euk"/>
    <property type="match status" value="1"/>
</dbReference>
<dbReference type="PANTHER" id="PTHR11564">
    <property type="entry name" value="SIGNAL RECOGNITION PARTICLE 54K PROTEIN SRP54"/>
    <property type="match status" value="1"/>
</dbReference>
<dbReference type="PANTHER" id="PTHR11564:SF5">
    <property type="entry name" value="SIGNAL RECOGNITION PARTICLE SUBUNIT SRP54"/>
    <property type="match status" value="1"/>
</dbReference>
<dbReference type="Pfam" id="PF00448">
    <property type="entry name" value="SRP54"/>
    <property type="match status" value="1"/>
</dbReference>
<dbReference type="Pfam" id="PF02881">
    <property type="entry name" value="SRP54_N"/>
    <property type="match status" value="1"/>
</dbReference>
<dbReference type="Pfam" id="PF02978">
    <property type="entry name" value="SRP_SPB"/>
    <property type="match status" value="1"/>
</dbReference>
<dbReference type="SMART" id="SM00382">
    <property type="entry name" value="AAA"/>
    <property type="match status" value="1"/>
</dbReference>
<dbReference type="SMART" id="SM00962">
    <property type="entry name" value="SRP54"/>
    <property type="match status" value="1"/>
</dbReference>
<dbReference type="SMART" id="SM00963">
    <property type="entry name" value="SRP54_N"/>
    <property type="match status" value="1"/>
</dbReference>
<dbReference type="SUPFAM" id="SSF47364">
    <property type="entry name" value="Domain of the SRP/SRP receptor G-proteins"/>
    <property type="match status" value="1"/>
</dbReference>
<dbReference type="SUPFAM" id="SSF52540">
    <property type="entry name" value="P-loop containing nucleoside triphosphate hydrolases"/>
    <property type="match status" value="1"/>
</dbReference>
<dbReference type="SUPFAM" id="SSF47446">
    <property type="entry name" value="Signal peptide-binding domain"/>
    <property type="match status" value="1"/>
</dbReference>
<dbReference type="PROSITE" id="PS00300">
    <property type="entry name" value="SRP54"/>
    <property type="match status" value="1"/>
</dbReference>
<reference key="1">
    <citation type="journal article" date="1989" name="Nature">
        <title>Homology of 54K protein of signal-recognition particle, docking protein and two E. coli proteins with putative GTP-binding domains.</title>
        <authorList>
            <person name="Roemisch K."/>
            <person name="Webb J."/>
            <person name="Herz J."/>
            <person name="Prehn S."/>
            <person name="Frank R."/>
            <person name="Vingron M."/>
            <person name="Dobberstein B."/>
        </authorList>
    </citation>
    <scope>NUCLEOTIDE SEQUENCE [MRNA]</scope>
    <scope>PARTIAL PROTEIN SEQUENCE</scope>
    <source>
        <strain>Cocker spaniel</strain>
        <tissue>Kidney</tissue>
    </source>
</reference>
<reference key="2">
    <citation type="journal article" date="1980" name="Proc. Natl. Acad. Sci. U.S.A.">
        <title>Purification of a membrane-associated protein complex required for protein translocation across the endoplasmic reticulum.</title>
        <authorList>
            <person name="Walter P."/>
            <person name="Blobel G."/>
        </authorList>
    </citation>
    <scope>FUNCTION</scope>
    <scope>IDENTIFICATION IN A SIGNAL RECOGNITION PARTICLE COMPLEX</scope>
</reference>
<reference key="3">
    <citation type="journal article" date="1983" name="Cell">
        <title>Disassembly and reconstitution of signal recognition particle.</title>
        <authorList>
            <person name="Walter P."/>
            <person name="Blobel G."/>
        </authorList>
    </citation>
    <scope>FUNCTION</scope>
    <scope>SUBUNIT</scope>
</reference>
<reference key="4">
    <citation type="journal article" date="2006" name="Nature">
        <title>Following the signal sequence from ribosomal tunnel exit to signal recognition particle.</title>
        <authorList>
            <person name="Halic M."/>
            <person name="Blau M."/>
            <person name="Becker T."/>
            <person name="Mielke T."/>
            <person name="Pool M.R."/>
            <person name="Wild K."/>
            <person name="Sinning I."/>
            <person name="Beckmann R."/>
        </authorList>
    </citation>
    <scope>STRUCTURE BY ELECTRON MICROSCOPY (8.0 ANGSTROMS) OF THE 80S WHEAT GERM RIBOSOME IN COMPLEX WITH THE NASCENT CHAIN AND THE MAMMALIAN SIGNAL RECOGNITION PARTICLE</scope>
</reference>
<reference key="5">
    <citation type="journal article" date="2006" name="Science">
        <title>Signal recognition particle receptor exposes the ribosomal translocon binding site.</title>
        <authorList>
            <person name="Halic M."/>
            <person name="Gartmann M."/>
            <person name="Schlenker O."/>
            <person name="Mielke T."/>
            <person name="Pool M.R."/>
            <person name="Sinning I."/>
            <person name="Beckmann R."/>
        </authorList>
    </citation>
    <scope>STRUCTURE BY ELECTRON MICROSCOPY (7.4 ANGSTROMS) OF 326-434 OF SIGNAL RECOGNITION PARTICLE IN COMPLEX WITH THE 80S RIBOSOME AND THE SRP RECEPTOR</scope>
</reference>
<evidence type="ECO:0000250" key="1"/>
<evidence type="ECO:0000250" key="2">
    <source>
        <dbReference type="UniProtKB" id="P61011"/>
    </source>
</evidence>
<evidence type="ECO:0000269" key="3">
    <source>
    </source>
</evidence>
<evidence type="ECO:0000269" key="4">
    <source>
    </source>
</evidence>
<evidence type="ECO:0000305" key="5"/>
<feature type="chain" id="PRO_0000101191" description="Signal recognition particle subunit SRP54">
    <location>
        <begin position="1"/>
        <end position="504"/>
    </location>
</feature>
<feature type="region of interest" description="NG-domain" evidence="2">
    <location>
        <begin position="1"/>
        <end position="295"/>
    </location>
</feature>
<feature type="region of interest" description="M-domain" evidence="2">
    <location>
        <begin position="296"/>
        <end position="504"/>
    </location>
</feature>
<feature type="binding site" evidence="1">
    <location>
        <begin position="108"/>
        <end position="115"/>
    </location>
    <ligand>
        <name>GTP</name>
        <dbReference type="ChEBI" id="CHEBI:37565"/>
    </ligand>
</feature>
<feature type="binding site" evidence="1">
    <location>
        <begin position="190"/>
        <end position="194"/>
    </location>
    <ligand>
        <name>GTP</name>
        <dbReference type="ChEBI" id="CHEBI:37565"/>
    </ligand>
</feature>
<feature type="binding site" evidence="1">
    <location>
        <begin position="248"/>
        <end position="251"/>
    </location>
    <ligand>
        <name>GTP</name>
        <dbReference type="ChEBI" id="CHEBI:37565"/>
    </ligand>
</feature>
<proteinExistence type="evidence at protein level"/>